<proteinExistence type="inferred from homology"/>
<keyword id="KW-0963">Cytoplasm</keyword>
<keyword id="KW-0274">FAD</keyword>
<keyword id="KW-0285">Flavoprotein</keyword>
<keyword id="KW-0520">NAD</keyword>
<keyword id="KW-0819">tRNA processing</keyword>
<gene>
    <name evidence="1" type="primary">mnmG</name>
    <name evidence="1" type="synonym">gidA</name>
    <name type="ordered locus">Tcr_2177</name>
</gene>
<reference key="1">
    <citation type="journal article" date="2006" name="PLoS Biol.">
        <title>The genome of deep-sea vent chemolithoautotroph Thiomicrospira crunogena XCL-2.</title>
        <authorList>
            <person name="Scott K.M."/>
            <person name="Sievert S.M."/>
            <person name="Abril F.N."/>
            <person name="Ball L.A."/>
            <person name="Barrett C.J."/>
            <person name="Blake R.A."/>
            <person name="Boller A.J."/>
            <person name="Chain P.S.G."/>
            <person name="Clark J.A."/>
            <person name="Davis C.R."/>
            <person name="Detter C."/>
            <person name="Do K.F."/>
            <person name="Dobrinski K.P."/>
            <person name="Faza B.I."/>
            <person name="Fitzpatrick K.A."/>
            <person name="Freyermuth S.K."/>
            <person name="Harmer T.L."/>
            <person name="Hauser L.J."/>
            <person name="Huegler M."/>
            <person name="Kerfeld C.A."/>
            <person name="Klotz M.G."/>
            <person name="Kong W.W."/>
            <person name="Land M."/>
            <person name="Lapidus A."/>
            <person name="Larimer F.W."/>
            <person name="Longo D.L."/>
            <person name="Lucas S."/>
            <person name="Malfatti S.A."/>
            <person name="Massey S.E."/>
            <person name="Martin D.D."/>
            <person name="McCuddin Z."/>
            <person name="Meyer F."/>
            <person name="Moore J.L."/>
            <person name="Ocampo L.H. Jr."/>
            <person name="Paul J.H."/>
            <person name="Paulsen I.T."/>
            <person name="Reep D.K."/>
            <person name="Ren Q."/>
            <person name="Ross R.L."/>
            <person name="Sato P.Y."/>
            <person name="Thomas P."/>
            <person name="Tinkham L.E."/>
            <person name="Zeruth G.T."/>
        </authorList>
    </citation>
    <scope>NUCLEOTIDE SEQUENCE [LARGE SCALE GENOMIC DNA]</scope>
    <source>
        <strain>DSM 25203 / XCL-2</strain>
    </source>
</reference>
<sequence>MDSKITNFDVIVVGGGHAGTEAALAAARMGVRTLLLTDNIDTLGQMSCNPAIGGIGKGHLVKEIDALGGAMAMAIDESGIQFRTLNASKGPAVRATRAQADRVLYRQAIRMRLENQVNLTIFQQSVEDLILEGDKVVGAETKMGLKFYAHQVVLTAGTFLAGRIHIGLQNYEGGRAGDAPSNRLAAKLRELALPVGRLKTGTPPRIDARTVDFEAMQMQPGDDPMPVFSYMGKVSMHPEQMPCYITYTNEQTHDFIRDSLDQSPMYSDAGEIDSVGPRYCPSIEDKVMRFSERNQHQVFIEPEGLTSNELYPNGISTSLPFETQMQIVQSMKGLENARIMRPGYAIEYDYFDPRGLRPTLETQAIHGLYFAGQINGTTGYEEAAAQGLLAGMNAARRAQMKEQWYPRRDEAYIGVLVDDLITLGTSEPYRMFTSRAEYRLMLREDNADQRLTAIGREFGLVDDARWLSFEGKMETMEAELARLKQTWIHPKHAEAKKAEALMDLPLSKEQTLFDLLKRPNVSYDALATMDMFGNAVTDPTVVEQIEIEAKYAGYIARQQEDIDKLRRAENVEIPDALDLDKISGLSNEVKQKLRDHKPATLGMASRISGITPAAVSLLLIYIKKLRKTSQSVG</sequence>
<protein>
    <recommendedName>
        <fullName evidence="1">tRNA uridine 5-carboxymethylaminomethyl modification enzyme MnmG</fullName>
    </recommendedName>
    <alternativeName>
        <fullName evidence="1">Glucose-inhibited division protein A</fullName>
    </alternativeName>
</protein>
<name>MNMG_HYDCU</name>
<accession>Q31DK8</accession>
<evidence type="ECO:0000255" key="1">
    <source>
        <dbReference type="HAMAP-Rule" id="MF_00129"/>
    </source>
</evidence>
<organism>
    <name type="scientific">Hydrogenovibrio crunogenus (strain DSM 25203 / XCL-2)</name>
    <name type="common">Thiomicrospira crunogena</name>
    <dbReference type="NCBI Taxonomy" id="317025"/>
    <lineage>
        <taxon>Bacteria</taxon>
        <taxon>Pseudomonadati</taxon>
        <taxon>Pseudomonadota</taxon>
        <taxon>Gammaproteobacteria</taxon>
        <taxon>Thiotrichales</taxon>
        <taxon>Piscirickettsiaceae</taxon>
        <taxon>Hydrogenovibrio</taxon>
    </lineage>
</organism>
<dbReference type="EMBL" id="CP000109">
    <property type="protein sequence ID" value="ABB42765.1"/>
    <property type="molecule type" value="Genomic_DNA"/>
</dbReference>
<dbReference type="SMR" id="Q31DK8"/>
<dbReference type="STRING" id="317025.Tcr_2177"/>
<dbReference type="KEGG" id="tcx:Tcr_2177"/>
<dbReference type="eggNOG" id="COG0445">
    <property type="taxonomic scope" value="Bacteria"/>
</dbReference>
<dbReference type="HOGENOM" id="CLU_007831_2_2_6"/>
<dbReference type="OrthoDB" id="9815560at2"/>
<dbReference type="GO" id="GO:0005829">
    <property type="term" value="C:cytosol"/>
    <property type="evidence" value="ECO:0007669"/>
    <property type="project" value="TreeGrafter"/>
</dbReference>
<dbReference type="GO" id="GO:0050660">
    <property type="term" value="F:flavin adenine dinucleotide binding"/>
    <property type="evidence" value="ECO:0007669"/>
    <property type="project" value="UniProtKB-UniRule"/>
</dbReference>
<dbReference type="GO" id="GO:0030488">
    <property type="term" value="P:tRNA methylation"/>
    <property type="evidence" value="ECO:0007669"/>
    <property type="project" value="TreeGrafter"/>
</dbReference>
<dbReference type="GO" id="GO:0002098">
    <property type="term" value="P:tRNA wobble uridine modification"/>
    <property type="evidence" value="ECO:0007669"/>
    <property type="project" value="InterPro"/>
</dbReference>
<dbReference type="FunFam" id="1.10.10.1800:FF:000001">
    <property type="entry name" value="tRNA uridine 5-carboxymethylaminomethyl modification enzyme MnmG"/>
    <property type="match status" value="1"/>
</dbReference>
<dbReference type="FunFam" id="1.10.150.570:FF:000001">
    <property type="entry name" value="tRNA uridine 5-carboxymethylaminomethyl modification enzyme MnmG"/>
    <property type="match status" value="1"/>
</dbReference>
<dbReference type="FunFam" id="3.50.50.60:FF:000002">
    <property type="entry name" value="tRNA uridine 5-carboxymethylaminomethyl modification enzyme MnmG"/>
    <property type="match status" value="1"/>
</dbReference>
<dbReference type="FunFam" id="3.50.50.60:FF:000010">
    <property type="entry name" value="tRNA uridine 5-carboxymethylaminomethyl modification enzyme MnmG"/>
    <property type="match status" value="1"/>
</dbReference>
<dbReference type="Gene3D" id="3.50.50.60">
    <property type="entry name" value="FAD/NAD(P)-binding domain"/>
    <property type="match status" value="2"/>
</dbReference>
<dbReference type="Gene3D" id="1.10.150.570">
    <property type="entry name" value="GidA associated domain, C-terminal subdomain"/>
    <property type="match status" value="1"/>
</dbReference>
<dbReference type="Gene3D" id="1.10.10.1800">
    <property type="entry name" value="tRNA uridine 5-carboxymethylaminomethyl modification enzyme MnmG/GidA"/>
    <property type="match status" value="1"/>
</dbReference>
<dbReference type="HAMAP" id="MF_00129">
    <property type="entry name" value="MnmG_GidA"/>
    <property type="match status" value="1"/>
</dbReference>
<dbReference type="InterPro" id="IPR036188">
    <property type="entry name" value="FAD/NAD-bd_sf"/>
</dbReference>
<dbReference type="InterPro" id="IPR049312">
    <property type="entry name" value="GIDA_C_N"/>
</dbReference>
<dbReference type="InterPro" id="IPR004416">
    <property type="entry name" value="MnmG"/>
</dbReference>
<dbReference type="InterPro" id="IPR002218">
    <property type="entry name" value="MnmG-rel"/>
</dbReference>
<dbReference type="InterPro" id="IPR020595">
    <property type="entry name" value="MnmG-rel_CS"/>
</dbReference>
<dbReference type="InterPro" id="IPR026904">
    <property type="entry name" value="MnmG_C"/>
</dbReference>
<dbReference type="InterPro" id="IPR047001">
    <property type="entry name" value="MnmG_C_subdom"/>
</dbReference>
<dbReference type="InterPro" id="IPR044920">
    <property type="entry name" value="MnmG_C_subdom_sf"/>
</dbReference>
<dbReference type="InterPro" id="IPR040131">
    <property type="entry name" value="MnmG_N"/>
</dbReference>
<dbReference type="NCBIfam" id="TIGR00136">
    <property type="entry name" value="mnmG_gidA"/>
    <property type="match status" value="1"/>
</dbReference>
<dbReference type="PANTHER" id="PTHR11806">
    <property type="entry name" value="GLUCOSE INHIBITED DIVISION PROTEIN A"/>
    <property type="match status" value="1"/>
</dbReference>
<dbReference type="PANTHER" id="PTHR11806:SF0">
    <property type="entry name" value="PROTEIN MTO1 HOMOLOG, MITOCHONDRIAL"/>
    <property type="match status" value="1"/>
</dbReference>
<dbReference type="Pfam" id="PF01134">
    <property type="entry name" value="GIDA"/>
    <property type="match status" value="1"/>
</dbReference>
<dbReference type="Pfam" id="PF21680">
    <property type="entry name" value="GIDA_C_1st"/>
    <property type="match status" value="1"/>
</dbReference>
<dbReference type="Pfam" id="PF13932">
    <property type="entry name" value="SAM_GIDA_C"/>
    <property type="match status" value="1"/>
</dbReference>
<dbReference type="SMART" id="SM01228">
    <property type="entry name" value="GIDA_assoc_3"/>
    <property type="match status" value="1"/>
</dbReference>
<dbReference type="SUPFAM" id="SSF51905">
    <property type="entry name" value="FAD/NAD(P)-binding domain"/>
    <property type="match status" value="1"/>
</dbReference>
<dbReference type="PROSITE" id="PS01280">
    <property type="entry name" value="GIDA_1"/>
    <property type="match status" value="1"/>
</dbReference>
<dbReference type="PROSITE" id="PS01281">
    <property type="entry name" value="GIDA_2"/>
    <property type="match status" value="1"/>
</dbReference>
<comment type="function">
    <text evidence="1">NAD-binding protein involved in the addition of a carboxymethylaminomethyl (cmnm) group at the wobble position (U34) of certain tRNAs, forming tRNA-cmnm(5)s(2)U34.</text>
</comment>
<comment type="cofactor">
    <cofactor evidence="1">
        <name>FAD</name>
        <dbReference type="ChEBI" id="CHEBI:57692"/>
    </cofactor>
</comment>
<comment type="subunit">
    <text evidence="1">Homodimer. Heterotetramer of two MnmE and two MnmG subunits.</text>
</comment>
<comment type="subcellular location">
    <subcellularLocation>
        <location evidence="1">Cytoplasm</location>
    </subcellularLocation>
</comment>
<comment type="similarity">
    <text evidence="1">Belongs to the MnmG family.</text>
</comment>
<feature type="chain" id="PRO_0000345355" description="tRNA uridine 5-carboxymethylaminomethyl modification enzyme MnmG">
    <location>
        <begin position="1"/>
        <end position="633"/>
    </location>
</feature>
<feature type="binding site" evidence="1">
    <location>
        <begin position="14"/>
        <end position="19"/>
    </location>
    <ligand>
        <name>FAD</name>
        <dbReference type="ChEBI" id="CHEBI:57692"/>
    </ligand>
</feature>
<feature type="binding site" evidence="1">
    <location>
        <position position="126"/>
    </location>
    <ligand>
        <name>FAD</name>
        <dbReference type="ChEBI" id="CHEBI:57692"/>
    </ligand>
</feature>
<feature type="binding site" evidence="1">
    <location>
        <position position="181"/>
    </location>
    <ligand>
        <name>FAD</name>
        <dbReference type="ChEBI" id="CHEBI:57692"/>
    </ligand>
</feature>
<feature type="binding site" evidence="1">
    <location>
        <begin position="276"/>
        <end position="290"/>
    </location>
    <ligand>
        <name>NAD(+)</name>
        <dbReference type="ChEBI" id="CHEBI:57540"/>
    </ligand>
</feature>
<feature type="binding site" evidence="1">
    <location>
        <position position="373"/>
    </location>
    <ligand>
        <name>FAD</name>
        <dbReference type="ChEBI" id="CHEBI:57692"/>
    </ligand>
</feature>